<comment type="subcellular location">
    <subcellularLocation>
        <location evidence="2">Membrane</location>
        <topology evidence="2">Single-pass membrane protein</topology>
    </subcellularLocation>
</comment>
<sequence length="60" mass="6994">MFDSSIERVTLELCFHITLSIMCGCSIYFLLLVFILTFYSSVLLHLKLYFFSSDRAIFNA</sequence>
<reference key="1">
    <citation type="journal article" date="1997" name="Nature">
        <title>The nucleotide sequence of Saccharomyces cerevisiae chromosome VII.</title>
        <authorList>
            <person name="Tettelin H."/>
            <person name="Agostoni-Carbone M.L."/>
            <person name="Albermann K."/>
            <person name="Albers M."/>
            <person name="Arroyo J."/>
            <person name="Backes U."/>
            <person name="Barreiros T."/>
            <person name="Bertani I."/>
            <person name="Bjourson A.J."/>
            <person name="Brueckner M."/>
            <person name="Bruschi C.V."/>
            <person name="Carignani G."/>
            <person name="Castagnoli L."/>
            <person name="Cerdan E."/>
            <person name="Clemente M.L."/>
            <person name="Coblenz A."/>
            <person name="Coglievina M."/>
            <person name="Coissac E."/>
            <person name="Defoor E."/>
            <person name="Del Bino S."/>
            <person name="Delius H."/>
            <person name="Delneri D."/>
            <person name="de Wergifosse P."/>
            <person name="Dujon B."/>
            <person name="Durand P."/>
            <person name="Entian K.-D."/>
            <person name="Eraso P."/>
            <person name="Escribano V."/>
            <person name="Fabiani L."/>
            <person name="Fartmann B."/>
            <person name="Feroli F."/>
            <person name="Feuermann M."/>
            <person name="Frontali L."/>
            <person name="Garcia-Gonzalez M."/>
            <person name="Garcia-Saez M.I."/>
            <person name="Goffeau A."/>
            <person name="Guerreiro P."/>
            <person name="Hani J."/>
            <person name="Hansen M."/>
            <person name="Hebling U."/>
            <person name="Hernandez K."/>
            <person name="Heumann K."/>
            <person name="Hilger F."/>
            <person name="Hofmann B."/>
            <person name="Indge K.J."/>
            <person name="James C.M."/>
            <person name="Klima R."/>
            <person name="Koetter P."/>
            <person name="Kramer B."/>
            <person name="Kramer W."/>
            <person name="Lauquin G."/>
            <person name="Leuther H."/>
            <person name="Louis E.J."/>
            <person name="Maillier E."/>
            <person name="Marconi A."/>
            <person name="Martegani E."/>
            <person name="Mazon M.J."/>
            <person name="Mazzoni C."/>
            <person name="McReynolds A.D.K."/>
            <person name="Melchioretto P."/>
            <person name="Mewes H.-W."/>
            <person name="Minenkova O."/>
            <person name="Mueller-Auer S."/>
            <person name="Nawrocki A."/>
            <person name="Netter P."/>
            <person name="Neu R."/>
            <person name="Nombela C."/>
            <person name="Oliver S.G."/>
            <person name="Panzeri L."/>
            <person name="Paoluzi S."/>
            <person name="Plevani P."/>
            <person name="Portetelle D."/>
            <person name="Portillo F."/>
            <person name="Potier S."/>
            <person name="Purnelle B."/>
            <person name="Rieger M."/>
            <person name="Riles L."/>
            <person name="Rinaldi T."/>
            <person name="Robben J."/>
            <person name="Rodrigues-Pousada C."/>
            <person name="Rodriguez-Belmonte E."/>
            <person name="Rodriguez-Torres A.M."/>
            <person name="Rose M."/>
            <person name="Ruzzi M."/>
            <person name="Saliola M."/>
            <person name="Sanchez-Perez M."/>
            <person name="Schaefer B."/>
            <person name="Schaefer M."/>
            <person name="Scharfe M."/>
            <person name="Schmidheini T."/>
            <person name="Schreer A."/>
            <person name="Skala J."/>
            <person name="Souciet J.-L."/>
            <person name="Steensma H.Y."/>
            <person name="Talla E."/>
            <person name="Thierry A."/>
            <person name="Vandenbol M."/>
            <person name="van der Aart Q.J.M."/>
            <person name="Van Dyck L."/>
            <person name="Vanoni M."/>
            <person name="Verhasselt P."/>
            <person name="Voet M."/>
            <person name="Volckaert G."/>
            <person name="Wambutt R."/>
            <person name="Watson M.D."/>
            <person name="Weber N."/>
            <person name="Wedler E."/>
            <person name="Wedler H."/>
            <person name="Wipfli P."/>
            <person name="Wolf K."/>
            <person name="Wright L.F."/>
            <person name="Zaccaria P."/>
            <person name="Zimmermann M."/>
            <person name="Zollner A."/>
            <person name="Kleine K."/>
        </authorList>
    </citation>
    <scope>NUCLEOTIDE SEQUENCE [LARGE SCALE GENOMIC DNA]</scope>
    <source>
        <strain>ATCC 204508 / S288c</strain>
    </source>
</reference>
<reference key="2">
    <citation type="journal article" date="2014" name="G3 (Bethesda)">
        <title>The reference genome sequence of Saccharomyces cerevisiae: Then and now.</title>
        <authorList>
            <person name="Engel S.R."/>
            <person name="Dietrich F.S."/>
            <person name="Fisk D.G."/>
            <person name="Binkley G."/>
            <person name="Balakrishnan R."/>
            <person name="Costanzo M.C."/>
            <person name="Dwight S.S."/>
            <person name="Hitz B.C."/>
            <person name="Karra K."/>
            <person name="Nash R.S."/>
            <person name="Weng S."/>
            <person name="Wong E.D."/>
            <person name="Lloyd P."/>
            <person name="Skrzypek M.S."/>
            <person name="Miyasato S.R."/>
            <person name="Simison M."/>
            <person name="Cherry J.M."/>
        </authorList>
    </citation>
    <scope>GENOME REANNOTATION</scope>
    <source>
        <strain>ATCC 204508 / S288c</strain>
    </source>
</reference>
<reference key="3">
    <citation type="journal article" date="2003" name="Genome Res.">
        <title>Systematic discovery of new genes in the Saccharomyces cerevisiae genome.</title>
        <authorList>
            <person name="Kessler M.M."/>
            <person name="Zeng Q."/>
            <person name="Hogan S."/>
            <person name="Cook R."/>
            <person name="Morales A.J."/>
            <person name="Cottarel G."/>
        </authorList>
    </citation>
    <scope>GENOME REANNOTATION</scope>
</reference>
<gene>
    <name type="ordered locus">YGL041C-B</name>
</gene>
<keyword id="KW-0472">Membrane</keyword>
<keyword id="KW-1185">Reference proteome</keyword>
<keyword id="KW-0812">Transmembrane</keyword>
<keyword id="KW-1133">Transmembrane helix</keyword>
<accession>Q3E750</accession>
<accession>D6VU97</accession>
<proteinExistence type="predicted"/>
<evidence type="ECO:0000255" key="1"/>
<evidence type="ECO:0000305" key="2"/>
<feature type="chain" id="PRO_0000245379" description="Uncharacterized protein YGL041C-B">
    <location>
        <begin position="1"/>
        <end position="60"/>
    </location>
</feature>
<feature type="transmembrane region" description="Helical" evidence="1">
    <location>
        <begin position="19"/>
        <end position="39"/>
    </location>
</feature>
<name>YG41B_YEAST</name>
<protein>
    <recommendedName>
        <fullName>Uncharacterized protein YGL041C-B</fullName>
    </recommendedName>
</protein>
<organism>
    <name type="scientific">Saccharomyces cerevisiae (strain ATCC 204508 / S288c)</name>
    <name type="common">Baker's yeast</name>
    <dbReference type="NCBI Taxonomy" id="559292"/>
    <lineage>
        <taxon>Eukaryota</taxon>
        <taxon>Fungi</taxon>
        <taxon>Dikarya</taxon>
        <taxon>Ascomycota</taxon>
        <taxon>Saccharomycotina</taxon>
        <taxon>Saccharomycetes</taxon>
        <taxon>Saccharomycetales</taxon>
        <taxon>Saccharomycetaceae</taxon>
        <taxon>Saccharomyces</taxon>
    </lineage>
</organism>
<dbReference type="EMBL" id="Z72563">
    <property type="status" value="NOT_ANNOTATED_CDS"/>
    <property type="molecule type" value="Genomic_DNA"/>
</dbReference>
<dbReference type="EMBL" id="BK006941">
    <property type="protein sequence ID" value="DAA08058.1"/>
    <property type="molecule type" value="Genomic_DNA"/>
</dbReference>
<dbReference type="RefSeq" id="NP_878074.1">
    <property type="nucleotide sequence ID" value="NM_001184550.1"/>
</dbReference>
<dbReference type="BioGRID" id="36996">
    <property type="interactions" value="2"/>
</dbReference>
<dbReference type="FunCoup" id="Q3E750">
    <property type="interactions" value="1"/>
</dbReference>
<dbReference type="STRING" id="4932.YGL041C-B"/>
<dbReference type="PaxDb" id="4932-YGL041C-B"/>
<dbReference type="EnsemblFungi" id="YGL041C-B_mRNA">
    <property type="protein sequence ID" value="YGL041C-B"/>
    <property type="gene ID" value="YGL041C-B"/>
</dbReference>
<dbReference type="GeneID" id="1466454"/>
<dbReference type="KEGG" id="sce:YGL041C-B"/>
<dbReference type="AGR" id="SGD:S000028548"/>
<dbReference type="SGD" id="S000028548">
    <property type="gene designation" value="YGL041C-B"/>
</dbReference>
<dbReference type="VEuPathDB" id="FungiDB:YGL041C-B"/>
<dbReference type="HOGENOM" id="CLU_2943094_0_0_1"/>
<dbReference type="InParanoid" id="Q3E750"/>
<dbReference type="OrthoDB" id="10280198at2759"/>
<dbReference type="BioCyc" id="YEAST:G3O-31010-MONOMER"/>
<dbReference type="BioGRID-ORCS" id="1466454">
    <property type="hits" value="0 hits in 10 CRISPR screens"/>
</dbReference>
<dbReference type="PRO" id="PR:Q3E750"/>
<dbReference type="Proteomes" id="UP000002311">
    <property type="component" value="Chromosome VII"/>
</dbReference>
<dbReference type="RNAct" id="Q3E750">
    <property type="molecule type" value="protein"/>
</dbReference>
<dbReference type="GO" id="GO:0005783">
    <property type="term" value="C:endoplasmic reticulum"/>
    <property type="evidence" value="ECO:0007005"/>
    <property type="project" value="SGD"/>
</dbReference>
<dbReference type="GO" id="GO:0016020">
    <property type="term" value="C:membrane"/>
    <property type="evidence" value="ECO:0007669"/>
    <property type="project" value="UniProtKB-SubCell"/>
</dbReference>